<evidence type="ECO:0000255" key="1">
    <source>
        <dbReference type="HAMAP-Rule" id="MF_00049"/>
    </source>
</evidence>
<accession>Q0TK31</accession>
<feature type="chain" id="PRO_1000009337" description="Leucine--tRNA ligase">
    <location>
        <begin position="1"/>
        <end position="860"/>
    </location>
</feature>
<feature type="short sequence motif" description="'HIGH' region">
    <location>
        <begin position="42"/>
        <end position="52"/>
    </location>
</feature>
<feature type="short sequence motif" description="'KMSKS' region">
    <location>
        <begin position="619"/>
        <end position="623"/>
    </location>
</feature>
<feature type="binding site" evidence="1">
    <location>
        <position position="622"/>
    </location>
    <ligand>
        <name>ATP</name>
        <dbReference type="ChEBI" id="CHEBI:30616"/>
    </ligand>
</feature>
<comment type="catalytic activity">
    <reaction evidence="1">
        <text>tRNA(Leu) + L-leucine + ATP = L-leucyl-tRNA(Leu) + AMP + diphosphate</text>
        <dbReference type="Rhea" id="RHEA:11688"/>
        <dbReference type="Rhea" id="RHEA-COMP:9613"/>
        <dbReference type="Rhea" id="RHEA-COMP:9622"/>
        <dbReference type="ChEBI" id="CHEBI:30616"/>
        <dbReference type="ChEBI" id="CHEBI:33019"/>
        <dbReference type="ChEBI" id="CHEBI:57427"/>
        <dbReference type="ChEBI" id="CHEBI:78442"/>
        <dbReference type="ChEBI" id="CHEBI:78494"/>
        <dbReference type="ChEBI" id="CHEBI:456215"/>
        <dbReference type="EC" id="6.1.1.4"/>
    </reaction>
</comment>
<comment type="subcellular location">
    <subcellularLocation>
        <location evidence="1">Cytoplasm</location>
    </subcellularLocation>
</comment>
<comment type="similarity">
    <text evidence="1">Belongs to the class-I aminoacyl-tRNA synthetase family.</text>
</comment>
<protein>
    <recommendedName>
        <fullName evidence="1">Leucine--tRNA ligase</fullName>
        <ecNumber evidence="1">6.1.1.4</ecNumber>
    </recommendedName>
    <alternativeName>
        <fullName evidence="1">Leucyl-tRNA synthetase</fullName>
        <shortName evidence="1">LeuRS</shortName>
    </alternativeName>
</protein>
<sequence length="860" mass="97234">MQEQYRPEEIESKVQLHWDEKRTFEVTEDESKEKYYCLSMLPYPSGRLHMGHVRNYTIGDVIARYQRMLGKNVLQPIGWDAFGLPAEGAAVKNNTAPAPWTYDNIAYMKNQLKMLGFGYDWSRELATCTPEYYRWEQKFFTELYKKGLVYKKTSAVNWCPNDQTVLANEQVIDGCCWRCDTKVERKEIPQWFIKITAYADELLNDLDKLDHWPDTVKTMQRNWIGRSEGVEITFNVNDYDNTLTVYTTRPDTFMGCTYLAVAAGHPLAQKAAENNPELAAFIDECRNTKVAEAEMATMEKKGVDTGFKAVHPLTGEEIPVWAANFVLMEYGTGAVMAVPGHDQRDYEFASKYGLNIKPVILAADGSEPDLSQQALTEKGVLFNSGEFNGLDHEAAFNAIADKLTAMGVGERKVNYRLRDWGVSRQRYWGAPIPMVTLEDGTVMPTPDDQLPVILPEDVVMDGITSPIKADPEWAKTTVNGMPALRETDTFDTFMESSWYYARYTCPEYKEGMLDSKAANYWLPVDIYIGGIEHAIMHLLYFRFFHKLMRDAGMVNSDEPAKQLLCQGMVLADAFYYVGENGERNWVSPVDAIVERDEKGRIVKAKDAAGHELVYTGMSKMSKSKNNGIDPQVMVERYGADTVRLFMMFASPADMTLEWQESGVEGANRFLKRVWKLVYEHTAKGDVAALNVDALTEDQKALRRDVHKTIAKVTDDIGRRQTFNTAIAAIMELMNKLAKAPTDGEQDRALMQEALLAVVRMLNPFTPHICFTLWQELKGEGDIDNAPWPVADEKAMVEDSTLVVVQVNGKVRAKITVPVDATEEQVRERAGQKHLVAKYLDGVTVRKVIYVPGKLLNLVVG</sequence>
<proteinExistence type="inferred from homology"/>
<organism>
    <name type="scientific">Escherichia coli O6:K15:H31 (strain 536 / UPEC)</name>
    <dbReference type="NCBI Taxonomy" id="362663"/>
    <lineage>
        <taxon>Bacteria</taxon>
        <taxon>Pseudomonadati</taxon>
        <taxon>Pseudomonadota</taxon>
        <taxon>Gammaproteobacteria</taxon>
        <taxon>Enterobacterales</taxon>
        <taxon>Enterobacteriaceae</taxon>
        <taxon>Escherichia</taxon>
    </lineage>
</organism>
<dbReference type="EC" id="6.1.1.4" evidence="1"/>
<dbReference type="EMBL" id="CP000247">
    <property type="protein sequence ID" value="ABG68700.1"/>
    <property type="molecule type" value="Genomic_DNA"/>
</dbReference>
<dbReference type="RefSeq" id="WP_011579093.1">
    <property type="nucleotide sequence ID" value="NC_008253.1"/>
</dbReference>
<dbReference type="SMR" id="Q0TK31"/>
<dbReference type="KEGG" id="ecp:ECP_0672"/>
<dbReference type="HOGENOM" id="CLU_004427_0_0_6"/>
<dbReference type="Proteomes" id="UP000009182">
    <property type="component" value="Chromosome"/>
</dbReference>
<dbReference type="GO" id="GO:0005829">
    <property type="term" value="C:cytosol"/>
    <property type="evidence" value="ECO:0007669"/>
    <property type="project" value="TreeGrafter"/>
</dbReference>
<dbReference type="GO" id="GO:0002161">
    <property type="term" value="F:aminoacyl-tRNA deacylase activity"/>
    <property type="evidence" value="ECO:0007669"/>
    <property type="project" value="InterPro"/>
</dbReference>
<dbReference type="GO" id="GO:0005524">
    <property type="term" value="F:ATP binding"/>
    <property type="evidence" value="ECO:0007669"/>
    <property type="project" value="UniProtKB-UniRule"/>
</dbReference>
<dbReference type="GO" id="GO:0004823">
    <property type="term" value="F:leucine-tRNA ligase activity"/>
    <property type="evidence" value="ECO:0007669"/>
    <property type="project" value="UniProtKB-UniRule"/>
</dbReference>
<dbReference type="GO" id="GO:0006429">
    <property type="term" value="P:leucyl-tRNA aminoacylation"/>
    <property type="evidence" value="ECO:0007669"/>
    <property type="project" value="UniProtKB-UniRule"/>
</dbReference>
<dbReference type="CDD" id="cd07958">
    <property type="entry name" value="Anticodon_Ia_Leu_BEm"/>
    <property type="match status" value="1"/>
</dbReference>
<dbReference type="CDD" id="cd00812">
    <property type="entry name" value="LeuRS_core"/>
    <property type="match status" value="1"/>
</dbReference>
<dbReference type="FunFam" id="1.10.730.10:FF:000002">
    <property type="entry name" value="Leucine--tRNA ligase"/>
    <property type="match status" value="2"/>
</dbReference>
<dbReference type="FunFam" id="2.20.28.290:FF:000001">
    <property type="entry name" value="Leucine--tRNA ligase"/>
    <property type="match status" value="1"/>
</dbReference>
<dbReference type="FunFam" id="3.10.20.590:FF:000001">
    <property type="entry name" value="Leucine--tRNA ligase"/>
    <property type="match status" value="1"/>
</dbReference>
<dbReference type="FunFam" id="3.40.50.620:FF:000003">
    <property type="entry name" value="Leucine--tRNA ligase"/>
    <property type="match status" value="1"/>
</dbReference>
<dbReference type="FunFam" id="3.40.50.620:FF:000124">
    <property type="entry name" value="Leucine--tRNA ligase"/>
    <property type="match status" value="1"/>
</dbReference>
<dbReference type="FunFam" id="3.90.740.10:FF:000012">
    <property type="entry name" value="Leucine--tRNA ligase"/>
    <property type="match status" value="1"/>
</dbReference>
<dbReference type="Gene3D" id="2.20.28.290">
    <property type="match status" value="1"/>
</dbReference>
<dbReference type="Gene3D" id="3.10.20.590">
    <property type="match status" value="1"/>
</dbReference>
<dbReference type="Gene3D" id="3.40.50.620">
    <property type="entry name" value="HUPs"/>
    <property type="match status" value="2"/>
</dbReference>
<dbReference type="Gene3D" id="1.10.730.10">
    <property type="entry name" value="Isoleucyl-tRNA Synthetase, Domain 1"/>
    <property type="match status" value="1"/>
</dbReference>
<dbReference type="HAMAP" id="MF_00049_B">
    <property type="entry name" value="Leu_tRNA_synth_B"/>
    <property type="match status" value="1"/>
</dbReference>
<dbReference type="InterPro" id="IPR001412">
    <property type="entry name" value="aa-tRNA-synth_I_CS"/>
</dbReference>
<dbReference type="InterPro" id="IPR002300">
    <property type="entry name" value="aa-tRNA-synth_Ia"/>
</dbReference>
<dbReference type="InterPro" id="IPR002302">
    <property type="entry name" value="Leu-tRNA-ligase"/>
</dbReference>
<dbReference type="InterPro" id="IPR025709">
    <property type="entry name" value="Leu_tRNA-synth_edit"/>
</dbReference>
<dbReference type="InterPro" id="IPR013155">
    <property type="entry name" value="M/V/L/I-tRNA-synth_anticd-bd"/>
</dbReference>
<dbReference type="InterPro" id="IPR015413">
    <property type="entry name" value="Methionyl/Leucyl_tRNA_Synth"/>
</dbReference>
<dbReference type="InterPro" id="IPR014729">
    <property type="entry name" value="Rossmann-like_a/b/a_fold"/>
</dbReference>
<dbReference type="InterPro" id="IPR009080">
    <property type="entry name" value="tRNAsynth_Ia_anticodon-bd"/>
</dbReference>
<dbReference type="InterPro" id="IPR009008">
    <property type="entry name" value="Val/Leu/Ile-tRNA-synth_edit"/>
</dbReference>
<dbReference type="NCBIfam" id="TIGR00396">
    <property type="entry name" value="leuS_bact"/>
    <property type="match status" value="1"/>
</dbReference>
<dbReference type="PANTHER" id="PTHR43740:SF2">
    <property type="entry name" value="LEUCINE--TRNA LIGASE, MITOCHONDRIAL"/>
    <property type="match status" value="1"/>
</dbReference>
<dbReference type="PANTHER" id="PTHR43740">
    <property type="entry name" value="LEUCYL-TRNA SYNTHETASE"/>
    <property type="match status" value="1"/>
</dbReference>
<dbReference type="Pfam" id="PF08264">
    <property type="entry name" value="Anticodon_1"/>
    <property type="match status" value="1"/>
</dbReference>
<dbReference type="Pfam" id="PF00133">
    <property type="entry name" value="tRNA-synt_1"/>
    <property type="match status" value="2"/>
</dbReference>
<dbReference type="Pfam" id="PF13603">
    <property type="entry name" value="tRNA-synt_1_2"/>
    <property type="match status" value="1"/>
</dbReference>
<dbReference type="Pfam" id="PF09334">
    <property type="entry name" value="tRNA-synt_1g"/>
    <property type="match status" value="1"/>
</dbReference>
<dbReference type="PRINTS" id="PR00985">
    <property type="entry name" value="TRNASYNTHLEU"/>
</dbReference>
<dbReference type="SUPFAM" id="SSF47323">
    <property type="entry name" value="Anticodon-binding domain of a subclass of class I aminoacyl-tRNA synthetases"/>
    <property type="match status" value="1"/>
</dbReference>
<dbReference type="SUPFAM" id="SSF52374">
    <property type="entry name" value="Nucleotidylyl transferase"/>
    <property type="match status" value="1"/>
</dbReference>
<dbReference type="SUPFAM" id="SSF50677">
    <property type="entry name" value="ValRS/IleRS/LeuRS editing domain"/>
    <property type="match status" value="1"/>
</dbReference>
<dbReference type="PROSITE" id="PS00178">
    <property type="entry name" value="AA_TRNA_LIGASE_I"/>
    <property type="match status" value="1"/>
</dbReference>
<reference key="1">
    <citation type="journal article" date="2006" name="Mol. Microbiol.">
        <title>Role of pathogenicity island-associated integrases in the genome plasticity of uropathogenic Escherichia coli strain 536.</title>
        <authorList>
            <person name="Hochhut B."/>
            <person name="Wilde C."/>
            <person name="Balling G."/>
            <person name="Middendorf B."/>
            <person name="Dobrindt U."/>
            <person name="Brzuszkiewicz E."/>
            <person name="Gottschalk G."/>
            <person name="Carniel E."/>
            <person name="Hacker J."/>
        </authorList>
    </citation>
    <scope>NUCLEOTIDE SEQUENCE [LARGE SCALE GENOMIC DNA]</scope>
    <source>
        <strain>536 / UPEC</strain>
    </source>
</reference>
<keyword id="KW-0030">Aminoacyl-tRNA synthetase</keyword>
<keyword id="KW-0067">ATP-binding</keyword>
<keyword id="KW-0963">Cytoplasm</keyword>
<keyword id="KW-0436">Ligase</keyword>
<keyword id="KW-0547">Nucleotide-binding</keyword>
<keyword id="KW-0648">Protein biosynthesis</keyword>
<gene>
    <name evidence="1" type="primary">leuS</name>
    <name type="ordered locus">ECP_0672</name>
</gene>
<name>SYL_ECOL5</name>